<name>TILS_MYCPN</name>
<protein>
    <recommendedName>
        <fullName evidence="1">tRNA(Ile)-lysidine synthase</fullName>
        <ecNumber evidence="1">6.3.4.19</ecNumber>
    </recommendedName>
    <alternativeName>
        <fullName evidence="1">tRNA(Ile)-2-lysyl-cytidine synthase</fullName>
    </alternativeName>
    <alternativeName>
        <fullName evidence="1">tRNA(Ile)-lysidine synthetase</fullName>
    </alternativeName>
</protein>
<accession>P75549</accession>
<comment type="function">
    <text evidence="1">Ligates lysine onto the cytidine present at position 34 of the AUA codon-specific tRNA(Ile) that contains the anticodon CAU, in an ATP-dependent manner. Cytidine is converted to lysidine, thus changing the amino acid specificity of the tRNA from methionine to isoleucine.</text>
</comment>
<comment type="catalytic activity">
    <reaction evidence="1">
        <text>cytidine(34) in tRNA(Ile2) + L-lysine + ATP = lysidine(34) in tRNA(Ile2) + AMP + diphosphate + H(+)</text>
        <dbReference type="Rhea" id="RHEA:43744"/>
        <dbReference type="Rhea" id="RHEA-COMP:10625"/>
        <dbReference type="Rhea" id="RHEA-COMP:10670"/>
        <dbReference type="ChEBI" id="CHEBI:15378"/>
        <dbReference type="ChEBI" id="CHEBI:30616"/>
        <dbReference type="ChEBI" id="CHEBI:32551"/>
        <dbReference type="ChEBI" id="CHEBI:33019"/>
        <dbReference type="ChEBI" id="CHEBI:82748"/>
        <dbReference type="ChEBI" id="CHEBI:83665"/>
        <dbReference type="ChEBI" id="CHEBI:456215"/>
        <dbReference type="EC" id="6.3.4.19"/>
    </reaction>
</comment>
<comment type="subcellular location">
    <subcellularLocation>
        <location evidence="1">Cytoplasm</location>
    </subcellularLocation>
</comment>
<comment type="domain">
    <text>The N-terminal region contains the highly conserved SGGXDS motif, predicted to be a P-loop motif involved in ATP binding.</text>
</comment>
<comment type="similarity">
    <text evidence="1">Belongs to the tRNA(Ile)-lysidine synthase family.</text>
</comment>
<sequence length="289" mass="34385">MPKTQYIAGVSGGPDSMLLLKLYHKKIACVVHVNYNKRTTALRDQKMVEEYCKQLKVPLIVHTVPEDTVWKKNFQAQARKIRFEQFQKAASLYKVDKLLLAHHRDDFIEQAKMQLDARKRAMYYGIKTRGELYGMKVYRPFIKYWKNEILALCEEHKVPYGIDETNAQPIYKRNQVRQEIANWSKEEKEEFYIGVCAMNRVIGQKLFSLMKRAKQWLAHPDVRELKRYPLPDQRQLVYSFLITHHIDVTGDKIDAILDFIQPFQQKHYRLKDEIFLSIKDERLTLLYKS</sequence>
<gene>
    <name evidence="1" type="primary">tilS</name>
    <name type="ordered locus">MPN_222</name>
    <name type="ORF">MP609</name>
</gene>
<feature type="chain" id="PRO_0000181731" description="tRNA(Ile)-lysidine synthase">
    <location>
        <begin position="1"/>
        <end position="289"/>
    </location>
</feature>
<feature type="binding site" evidence="1">
    <location>
        <begin position="11"/>
        <end position="16"/>
    </location>
    <ligand>
        <name>ATP</name>
        <dbReference type="ChEBI" id="CHEBI:30616"/>
    </ligand>
</feature>
<evidence type="ECO:0000255" key="1">
    <source>
        <dbReference type="HAMAP-Rule" id="MF_01161"/>
    </source>
</evidence>
<proteinExistence type="inferred from homology"/>
<keyword id="KW-0067">ATP-binding</keyword>
<keyword id="KW-0963">Cytoplasm</keyword>
<keyword id="KW-0436">Ligase</keyword>
<keyword id="KW-0547">Nucleotide-binding</keyword>
<keyword id="KW-1185">Reference proteome</keyword>
<keyword id="KW-0819">tRNA processing</keyword>
<organism>
    <name type="scientific">Mycoplasma pneumoniae (strain ATCC 29342 / M129 / Subtype 1)</name>
    <name type="common">Mycoplasmoides pneumoniae</name>
    <dbReference type="NCBI Taxonomy" id="272634"/>
    <lineage>
        <taxon>Bacteria</taxon>
        <taxon>Bacillati</taxon>
        <taxon>Mycoplasmatota</taxon>
        <taxon>Mycoplasmoidales</taxon>
        <taxon>Mycoplasmoidaceae</taxon>
        <taxon>Mycoplasmoides</taxon>
    </lineage>
</organism>
<dbReference type="EC" id="6.3.4.19" evidence="1"/>
<dbReference type="EMBL" id="U00089">
    <property type="protein sequence ID" value="AAB96257.1"/>
    <property type="molecule type" value="Genomic_DNA"/>
</dbReference>
<dbReference type="PIR" id="S73935">
    <property type="entry name" value="S73935"/>
</dbReference>
<dbReference type="RefSeq" id="NP_109910.1">
    <property type="nucleotide sequence ID" value="NC_000912.1"/>
</dbReference>
<dbReference type="RefSeq" id="WP_010874579.1">
    <property type="nucleotide sequence ID" value="NZ_OU342337.1"/>
</dbReference>
<dbReference type="SMR" id="P75549"/>
<dbReference type="IntAct" id="P75549">
    <property type="interactions" value="2"/>
</dbReference>
<dbReference type="STRING" id="272634.MPN_222"/>
<dbReference type="EnsemblBacteria" id="AAB96257">
    <property type="protein sequence ID" value="AAB96257"/>
    <property type="gene ID" value="MPN_222"/>
</dbReference>
<dbReference type="GeneID" id="66609132"/>
<dbReference type="KEGG" id="mpn:MPN_222"/>
<dbReference type="PATRIC" id="fig|272634.6.peg.241"/>
<dbReference type="HOGENOM" id="CLU_018869_0_2_14"/>
<dbReference type="OrthoDB" id="9807403at2"/>
<dbReference type="BioCyc" id="MPNE272634:G1GJ3-357-MONOMER"/>
<dbReference type="Proteomes" id="UP000000808">
    <property type="component" value="Chromosome"/>
</dbReference>
<dbReference type="GO" id="GO:0005737">
    <property type="term" value="C:cytoplasm"/>
    <property type="evidence" value="ECO:0007669"/>
    <property type="project" value="UniProtKB-SubCell"/>
</dbReference>
<dbReference type="GO" id="GO:0005524">
    <property type="term" value="F:ATP binding"/>
    <property type="evidence" value="ECO:0007669"/>
    <property type="project" value="UniProtKB-UniRule"/>
</dbReference>
<dbReference type="GO" id="GO:0032267">
    <property type="term" value="F:tRNA(Ile)-lysidine synthase activity"/>
    <property type="evidence" value="ECO:0007669"/>
    <property type="project" value="UniProtKB-EC"/>
</dbReference>
<dbReference type="GO" id="GO:0006400">
    <property type="term" value="P:tRNA modification"/>
    <property type="evidence" value="ECO:0007669"/>
    <property type="project" value="UniProtKB-UniRule"/>
</dbReference>
<dbReference type="CDD" id="cd01992">
    <property type="entry name" value="TilS_N"/>
    <property type="match status" value="1"/>
</dbReference>
<dbReference type="Gene3D" id="3.40.50.620">
    <property type="entry name" value="HUPs"/>
    <property type="match status" value="1"/>
</dbReference>
<dbReference type="HAMAP" id="MF_01161">
    <property type="entry name" value="tRNA_Ile_lys_synt"/>
    <property type="match status" value="1"/>
</dbReference>
<dbReference type="InterPro" id="IPR014729">
    <property type="entry name" value="Rossmann-like_a/b/a_fold"/>
</dbReference>
<dbReference type="InterPro" id="IPR011063">
    <property type="entry name" value="TilS/TtcA_N"/>
</dbReference>
<dbReference type="InterPro" id="IPR012094">
    <property type="entry name" value="tRNA_Ile_lys_synt"/>
</dbReference>
<dbReference type="InterPro" id="IPR012795">
    <property type="entry name" value="tRNA_Ile_lys_synt_N"/>
</dbReference>
<dbReference type="NCBIfam" id="TIGR02432">
    <property type="entry name" value="lysidine_TilS_N"/>
    <property type="match status" value="1"/>
</dbReference>
<dbReference type="PANTHER" id="PTHR43033">
    <property type="entry name" value="TRNA(ILE)-LYSIDINE SYNTHASE-RELATED"/>
    <property type="match status" value="1"/>
</dbReference>
<dbReference type="PANTHER" id="PTHR43033:SF1">
    <property type="entry name" value="TRNA(ILE)-LYSIDINE SYNTHASE-RELATED"/>
    <property type="match status" value="1"/>
</dbReference>
<dbReference type="Pfam" id="PF01171">
    <property type="entry name" value="ATP_bind_3"/>
    <property type="match status" value="1"/>
</dbReference>
<dbReference type="SUPFAM" id="SSF52402">
    <property type="entry name" value="Adenine nucleotide alpha hydrolases-like"/>
    <property type="match status" value="1"/>
</dbReference>
<reference key="1">
    <citation type="journal article" date="1996" name="Nucleic Acids Res.">
        <title>Complete sequence analysis of the genome of the bacterium Mycoplasma pneumoniae.</title>
        <authorList>
            <person name="Himmelreich R."/>
            <person name="Hilbert H."/>
            <person name="Plagens H."/>
            <person name="Pirkl E."/>
            <person name="Li B.-C."/>
            <person name="Herrmann R."/>
        </authorList>
    </citation>
    <scope>NUCLEOTIDE SEQUENCE [LARGE SCALE GENOMIC DNA]</scope>
    <source>
        <strain>ATCC 29342 / M129 / Subtype 1</strain>
    </source>
</reference>